<name>INSEP_ECO11</name>
<reference key="1">
    <citation type="journal article" date="1999" name="Infect. Immun.">
        <title>Complete DNA sequence and structural analysis of the enteropathogenic Escherichia coli adherence factor plasmid.</title>
        <authorList>
            <person name="Tobe T."/>
            <person name="Hayashi T."/>
            <person name="Han C.-G."/>
            <person name="Schoolnik G.K."/>
            <person name="Ohtsubo E."/>
            <person name="Sasakawa C."/>
        </authorList>
    </citation>
    <scope>NUCLEOTIDE SEQUENCE [GENOMIC DNA]</scope>
    <source>
        <strain>O111:H- / B171 / EPEC</strain>
    </source>
</reference>
<accession>P0ADH4</accession>
<accession>P77681</accession>
<accession>Q9S136</accession>
<evidence type="ECO:0000256" key="1">
    <source>
        <dbReference type="SAM" id="MobiDB-lite"/>
    </source>
</evidence>
<evidence type="ECO:0000305" key="2"/>
<geneLocation type="plasmid">
    <name>pB171</name>
</geneLocation>
<dbReference type="EMBL" id="AB024946">
    <property type="protein sequence ID" value="BAA84858.1"/>
    <property type="molecule type" value="Genomic_DNA"/>
</dbReference>
<dbReference type="SMR" id="P0ADH4"/>
<dbReference type="OMA" id="LHESQIY"/>
<dbReference type="GO" id="GO:0003677">
    <property type="term" value="F:DNA binding"/>
    <property type="evidence" value="ECO:0007669"/>
    <property type="project" value="UniProtKB-KW"/>
</dbReference>
<dbReference type="GO" id="GO:0004803">
    <property type="term" value="F:transposase activity"/>
    <property type="evidence" value="ECO:0007669"/>
    <property type="project" value="InterPro"/>
</dbReference>
<dbReference type="GO" id="GO:0006313">
    <property type="term" value="P:DNA transposition"/>
    <property type="evidence" value="ECO:0007669"/>
    <property type="project" value="InterPro"/>
</dbReference>
<dbReference type="InterPro" id="IPR009057">
    <property type="entry name" value="Homeodomain-like_sf"/>
</dbReference>
<dbReference type="InterPro" id="IPR051839">
    <property type="entry name" value="RD_transcriptional_regulator"/>
</dbReference>
<dbReference type="InterPro" id="IPR002514">
    <property type="entry name" value="Transposase_8"/>
</dbReference>
<dbReference type="PANTHER" id="PTHR33215">
    <property type="entry name" value="PROTEIN DISTAL ANTENNA"/>
    <property type="match status" value="1"/>
</dbReference>
<dbReference type="PANTHER" id="PTHR33215:SF6">
    <property type="entry name" value="TRANSPOSASE INSE FOR INSERTION SEQUENCE IS3A-RELATED"/>
    <property type="match status" value="1"/>
</dbReference>
<dbReference type="Pfam" id="PF01527">
    <property type="entry name" value="HTH_Tnp_1"/>
    <property type="match status" value="1"/>
</dbReference>
<dbReference type="SUPFAM" id="SSF46689">
    <property type="entry name" value="Homeodomain-like"/>
    <property type="match status" value="1"/>
</dbReference>
<comment type="function">
    <text>Involved in the transposition of the insertion sequence IS3.</text>
</comment>
<comment type="similarity">
    <text evidence="2">Belongs to the transposase 8 family.</text>
</comment>
<protein>
    <recommendedName>
        <fullName>Transposase InsE for insertion sequence IS3</fullName>
    </recommendedName>
</protein>
<proteinExistence type="inferred from homology"/>
<keyword id="KW-0233">DNA recombination</keyword>
<keyword id="KW-0238">DNA-binding</keyword>
<keyword id="KW-0614">Plasmid</keyword>
<keyword id="KW-0814">Transposable element</keyword>
<keyword id="KW-0815">Transposition</keyword>
<sequence>MTKTVSTSKKPRKQHSPEFRSEALKLAERIGVTAAARELSLYESQLYNWRSKQQNQQTSSERELEMSTEIARLKRQLAERDEELAILQKAATYFAKRLK</sequence>
<gene>
    <name type="primary">insE</name>
    <name type="synonym">ybfA</name>
</gene>
<feature type="chain" id="PRO_0000075413" description="Transposase InsE for insertion sequence IS3">
    <location>
        <begin position="1"/>
        <end position="99"/>
    </location>
</feature>
<feature type="region of interest" description="Disordered" evidence="1">
    <location>
        <begin position="1"/>
        <end position="21"/>
    </location>
</feature>
<organism>
    <name type="scientific">Escherichia coli O111:H-</name>
    <dbReference type="NCBI Taxonomy" id="168927"/>
    <lineage>
        <taxon>Bacteria</taxon>
        <taxon>Pseudomonadati</taxon>
        <taxon>Pseudomonadota</taxon>
        <taxon>Gammaproteobacteria</taxon>
        <taxon>Enterobacterales</taxon>
        <taxon>Enterobacteriaceae</taxon>
        <taxon>Escherichia</taxon>
    </lineage>
</organism>